<name>RL13_BARBK</name>
<sequence length="154" mass="17618">MVTFSQKPAEVVKKWILIDAENLVLGRLATLVANRLRGKHKPTFTPHVDDGDNVIVINADKVVLTGKKYTDKKYYWHTGYIGGIKERTARQILEGRFPERIIEKAVERMIPRGPLGRRQMRNLRVYAGSQHPHEAQQPEALDVGTLNRKNKRIA</sequence>
<accession>A1UT83</accession>
<reference key="1">
    <citation type="submission" date="2006-12" db="EMBL/GenBank/DDBJ databases">
        <authorList>
            <person name="Hendrix L."/>
            <person name="Mohamoud Y."/>
            <person name="Radune D."/>
            <person name="Shvartsbeyn A."/>
            <person name="Daugherty S."/>
            <person name="Dodson R."/>
            <person name="Durkin A.S."/>
            <person name="Harkins D."/>
            <person name="Huot H."/>
            <person name="Kothari S.P."/>
            <person name="Madupu R."/>
            <person name="Li J."/>
            <person name="Nelson W.C."/>
            <person name="Shrivastava S."/>
            <person name="Giglio M.G."/>
            <person name="Haft D."/>
            <person name="Selengut J."/>
            <person name="Fraser-Ligget C."/>
            <person name="Seshadri R."/>
        </authorList>
    </citation>
    <scope>NUCLEOTIDE SEQUENCE [LARGE SCALE GENOMIC DNA]</scope>
    <source>
        <strain>ATCC 35685 / KC583 / Herrer 020/F12,63</strain>
    </source>
</reference>
<dbReference type="EMBL" id="CP000524">
    <property type="protein sequence ID" value="ABM45348.1"/>
    <property type="molecule type" value="Genomic_DNA"/>
</dbReference>
<dbReference type="RefSeq" id="WP_005767330.1">
    <property type="nucleotide sequence ID" value="NC_008783.1"/>
</dbReference>
<dbReference type="SMR" id="A1UT83"/>
<dbReference type="STRING" id="360095.BARBAKC583_0901"/>
<dbReference type="GeneID" id="4684888"/>
<dbReference type="KEGG" id="bbk:BARBAKC583_0901"/>
<dbReference type="PATRIC" id="fig|360095.6.peg.877"/>
<dbReference type="eggNOG" id="COG0102">
    <property type="taxonomic scope" value="Bacteria"/>
</dbReference>
<dbReference type="HOGENOM" id="CLU_082184_2_0_5"/>
<dbReference type="OrthoDB" id="9801330at2"/>
<dbReference type="Proteomes" id="UP000000643">
    <property type="component" value="Chromosome"/>
</dbReference>
<dbReference type="GO" id="GO:0022625">
    <property type="term" value="C:cytosolic large ribosomal subunit"/>
    <property type="evidence" value="ECO:0007669"/>
    <property type="project" value="TreeGrafter"/>
</dbReference>
<dbReference type="GO" id="GO:0003729">
    <property type="term" value="F:mRNA binding"/>
    <property type="evidence" value="ECO:0007669"/>
    <property type="project" value="TreeGrafter"/>
</dbReference>
<dbReference type="GO" id="GO:0003735">
    <property type="term" value="F:structural constituent of ribosome"/>
    <property type="evidence" value="ECO:0007669"/>
    <property type="project" value="InterPro"/>
</dbReference>
<dbReference type="GO" id="GO:0017148">
    <property type="term" value="P:negative regulation of translation"/>
    <property type="evidence" value="ECO:0007669"/>
    <property type="project" value="TreeGrafter"/>
</dbReference>
<dbReference type="GO" id="GO:0006412">
    <property type="term" value="P:translation"/>
    <property type="evidence" value="ECO:0007669"/>
    <property type="project" value="UniProtKB-UniRule"/>
</dbReference>
<dbReference type="CDD" id="cd00392">
    <property type="entry name" value="Ribosomal_L13"/>
    <property type="match status" value="1"/>
</dbReference>
<dbReference type="FunFam" id="3.90.1180.10:FF:000001">
    <property type="entry name" value="50S ribosomal protein L13"/>
    <property type="match status" value="1"/>
</dbReference>
<dbReference type="Gene3D" id="3.90.1180.10">
    <property type="entry name" value="Ribosomal protein L13"/>
    <property type="match status" value="1"/>
</dbReference>
<dbReference type="HAMAP" id="MF_01366">
    <property type="entry name" value="Ribosomal_uL13"/>
    <property type="match status" value="1"/>
</dbReference>
<dbReference type="InterPro" id="IPR005822">
    <property type="entry name" value="Ribosomal_uL13"/>
</dbReference>
<dbReference type="InterPro" id="IPR005823">
    <property type="entry name" value="Ribosomal_uL13_bac-type"/>
</dbReference>
<dbReference type="InterPro" id="IPR036899">
    <property type="entry name" value="Ribosomal_uL13_sf"/>
</dbReference>
<dbReference type="NCBIfam" id="TIGR01066">
    <property type="entry name" value="rplM_bact"/>
    <property type="match status" value="1"/>
</dbReference>
<dbReference type="PANTHER" id="PTHR11545:SF2">
    <property type="entry name" value="LARGE RIBOSOMAL SUBUNIT PROTEIN UL13M"/>
    <property type="match status" value="1"/>
</dbReference>
<dbReference type="PANTHER" id="PTHR11545">
    <property type="entry name" value="RIBOSOMAL PROTEIN L13"/>
    <property type="match status" value="1"/>
</dbReference>
<dbReference type="Pfam" id="PF00572">
    <property type="entry name" value="Ribosomal_L13"/>
    <property type="match status" value="1"/>
</dbReference>
<dbReference type="PIRSF" id="PIRSF002181">
    <property type="entry name" value="Ribosomal_L13"/>
    <property type="match status" value="1"/>
</dbReference>
<dbReference type="SUPFAM" id="SSF52161">
    <property type="entry name" value="Ribosomal protein L13"/>
    <property type="match status" value="1"/>
</dbReference>
<gene>
    <name evidence="1" type="primary">rplM</name>
    <name type="ordered locus">BARBAKC583_0901</name>
</gene>
<feature type="chain" id="PRO_1000055344" description="Large ribosomal subunit protein uL13">
    <location>
        <begin position="1"/>
        <end position="154"/>
    </location>
</feature>
<feature type="region of interest" description="Disordered" evidence="2">
    <location>
        <begin position="129"/>
        <end position="154"/>
    </location>
</feature>
<organism>
    <name type="scientific">Bartonella bacilliformis (strain ATCC 35685 / KC583 / Herrer 020/F12,63)</name>
    <dbReference type="NCBI Taxonomy" id="360095"/>
    <lineage>
        <taxon>Bacteria</taxon>
        <taxon>Pseudomonadati</taxon>
        <taxon>Pseudomonadota</taxon>
        <taxon>Alphaproteobacteria</taxon>
        <taxon>Hyphomicrobiales</taxon>
        <taxon>Bartonellaceae</taxon>
        <taxon>Bartonella</taxon>
    </lineage>
</organism>
<proteinExistence type="inferred from homology"/>
<protein>
    <recommendedName>
        <fullName evidence="1">Large ribosomal subunit protein uL13</fullName>
    </recommendedName>
    <alternativeName>
        <fullName evidence="3">50S ribosomal protein L13</fullName>
    </alternativeName>
</protein>
<keyword id="KW-0687">Ribonucleoprotein</keyword>
<keyword id="KW-0689">Ribosomal protein</keyword>
<evidence type="ECO:0000255" key="1">
    <source>
        <dbReference type="HAMAP-Rule" id="MF_01366"/>
    </source>
</evidence>
<evidence type="ECO:0000256" key="2">
    <source>
        <dbReference type="SAM" id="MobiDB-lite"/>
    </source>
</evidence>
<evidence type="ECO:0000305" key="3"/>
<comment type="function">
    <text evidence="1">This protein is one of the early assembly proteins of the 50S ribosomal subunit, although it is not seen to bind rRNA by itself. It is important during the early stages of 50S assembly.</text>
</comment>
<comment type="subunit">
    <text evidence="1">Part of the 50S ribosomal subunit.</text>
</comment>
<comment type="similarity">
    <text evidence="1">Belongs to the universal ribosomal protein uL13 family.</text>
</comment>